<comment type="catalytic activity">
    <reaction evidence="1">
        <text>(6R)-10-formyltetrahydrofolate + 5-amino-1-(5-phospho-beta-D-ribosyl)imidazole-4-carboxamide = 5-formamido-1-(5-phospho-D-ribosyl)imidazole-4-carboxamide + (6S)-5,6,7,8-tetrahydrofolate</text>
        <dbReference type="Rhea" id="RHEA:22192"/>
        <dbReference type="ChEBI" id="CHEBI:57453"/>
        <dbReference type="ChEBI" id="CHEBI:58467"/>
        <dbReference type="ChEBI" id="CHEBI:58475"/>
        <dbReference type="ChEBI" id="CHEBI:195366"/>
        <dbReference type="EC" id="2.1.2.3"/>
    </reaction>
</comment>
<comment type="catalytic activity">
    <reaction evidence="1">
        <text>IMP + H2O = 5-formamido-1-(5-phospho-D-ribosyl)imidazole-4-carboxamide</text>
        <dbReference type="Rhea" id="RHEA:18445"/>
        <dbReference type="ChEBI" id="CHEBI:15377"/>
        <dbReference type="ChEBI" id="CHEBI:58053"/>
        <dbReference type="ChEBI" id="CHEBI:58467"/>
        <dbReference type="EC" id="3.5.4.10"/>
    </reaction>
</comment>
<comment type="pathway">
    <text evidence="1">Purine metabolism; IMP biosynthesis via de novo pathway; 5-formamido-1-(5-phospho-D-ribosyl)imidazole-4-carboxamide from 5-amino-1-(5-phospho-D-ribosyl)imidazole-4-carboxamide (10-formyl THF route): step 1/1.</text>
</comment>
<comment type="pathway">
    <text evidence="1">Purine metabolism; IMP biosynthesis via de novo pathway; IMP from 5-formamido-1-(5-phospho-D-ribosyl)imidazole-4-carboxamide: step 1/1.</text>
</comment>
<comment type="domain">
    <text evidence="1">The IMP cyclohydrolase activity resides in the N-terminal region.</text>
</comment>
<comment type="similarity">
    <text evidence="1">Belongs to the PurH family.</text>
</comment>
<reference key="1">
    <citation type="submission" date="2005-09" db="EMBL/GenBank/DDBJ databases">
        <title>Complete sequence of chromosome 1 of Rhodobacter sphaeroides 2.4.1.</title>
        <authorList>
            <person name="Copeland A."/>
            <person name="Lucas S."/>
            <person name="Lapidus A."/>
            <person name="Barry K."/>
            <person name="Detter J.C."/>
            <person name="Glavina T."/>
            <person name="Hammon N."/>
            <person name="Israni S."/>
            <person name="Pitluck S."/>
            <person name="Richardson P."/>
            <person name="Mackenzie C."/>
            <person name="Choudhary M."/>
            <person name="Larimer F."/>
            <person name="Hauser L.J."/>
            <person name="Land M."/>
            <person name="Donohue T.J."/>
            <person name="Kaplan S."/>
        </authorList>
    </citation>
    <scope>NUCLEOTIDE SEQUENCE [LARGE SCALE GENOMIC DNA]</scope>
    <source>
        <strain>ATCC 17023 / DSM 158 / JCM 6121 / CCUG 31486 / LMG 2827 / NBRC 12203 / NCIMB 8253 / ATH 2.4.1.</strain>
    </source>
</reference>
<proteinExistence type="inferred from homology"/>
<name>PUR9_CERS4</name>
<feature type="chain" id="PRO_1000057910" description="Bifunctional purine biosynthesis protein PurH">
    <location>
        <begin position="1"/>
        <end position="529"/>
    </location>
</feature>
<feature type="domain" description="MGS-like" evidence="2">
    <location>
        <begin position="2"/>
        <end position="149"/>
    </location>
</feature>
<keyword id="KW-0378">Hydrolase</keyword>
<keyword id="KW-0511">Multifunctional enzyme</keyword>
<keyword id="KW-0658">Purine biosynthesis</keyword>
<keyword id="KW-1185">Reference proteome</keyword>
<keyword id="KW-0808">Transferase</keyword>
<sequence>MTNLVPVGRALLSVSDKSGLLDLARALADLEVELISTGGTAAALRAAGLKVRDVAEVTGFPEMMDGRVKTLHPMVHGGLLALRDDDEHLVAMAAHGIEPIDLLVVNLYPFEAAVARGASYDDCIENIDIGGPAMIRAAAKNHRFVNVVTDTADYKALLDELRAHDGATRLSFRQKLALTAYARTAAYDTAVSTWMAGALKAEAPRRRSFAGTLAQTMRYGENPHQKAAFYTDGSARPGVATAKQWQGKELSYNNINDTDAAFELVAEFDPAEGPACVIVKHANPCGVARGATLAEAYARAFDCDRVSAFGGIIALNQPLDAATAEKITEIFTEVVIAPGADEEARAIFAAKKNLRLLTTEALPDPLAPGLAFKQVAGGFLVQDRDAGHVDALDLKVVTKRAPSDAELADLLFAWTVAKHVKSNAIVYVKDGATVGVGAGQMSRVDSTRIAARKSQDMAQALGLAQPLTQGSVVASDAFFPFADGLLAAAEAGATAIIQPGGSMRDDEVIAAADEAGLAMVFTGQRHFRH</sequence>
<dbReference type="EC" id="2.1.2.3" evidence="1"/>
<dbReference type="EC" id="3.5.4.10" evidence="1"/>
<dbReference type="EMBL" id="CP000143">
    <property type="protein sequence ID" value="ABA80286.1"/>
    <property type="molecule type" value="Genomic_DNA"/>
</dbReference>
<dbReference type="RefSeq" id="WP_002721490.1">
    <property type="nucleotide sequence ID" value="NZ_CP030271.1"/>
</dbReference>
<dbReference type="RefSeq" id="YP_354187.1">
    <property type="nucleotide sequence ID" value="NC_007493.2"/>
</dbReference>
<dbReference type="SMR" id="Q3IYU8"/>
<dbReference type="STRING" id="272943.RSP_1100"/>
<dbReference type="EnsemblBacteria" id="ABA80286">
    <property type="protein sequence ID" value="ABA80286"/>
    <property type="gene ID" value="RSP_1100"/>
</dbReference>
<dbReference type="GeneID" id="67447876"/>
<dbReference type="KEGG" id="rsp:RSP_1100"/>
<dbReference type="PATRIC" id="fig|272943.9.peg.3079"/>
<dbReference type="eggNOG" id="COG0138">
    <property type="taxonomic scope" value="Bacteria"/>
</dbReference>
<dbReference type="OrthoDB" id="9802065at2"/>
<dbReference type="PhylomeDB" id="Q3IYU8"/>
<dbReference type="UniPathway" id="UPA00074">
    <property type="reaction ID" value="UER00133"/>
</dbReference>
<dbReference type="UniPathway" id="UPA00074">
    <property type="reaction ID" value="UER00135"/>
</dbReference>
<dbReference type="Proteomes" id="UP000002703">
    <property type="component" value="Chromosome 1"/>
</dbReference>
<dbReference type="GO" id="GO:0005829">
    <property type="term" value="C:cytosol"/>
    <property type="evidence" value="ECO:0007669"/>
    <property type="project" value="TreeGrafter"/>
</dbReference>
<dbReference type="GO" id="GO:0003937">
    <property type="term" value="F:IMP cyclohydrolase activity"/>
    <property type="evidence" value="ECO:0007669"/>
    <property type="project" value="UniProtKB-UniRule"/>
</dbReference>
<dbReference type="GO" id="GO:0004643">
    <property type="term" value="F:phosphoribosylaminoimidazolecarboxamide formyltransferase activity"/>
    <property type="evidence" value="ECO:0007669"/>
    <property type="project" value="UniProtKB-UniRule"/>
</dbReference>
<dbReference type="GO" id="GO:0006189">
    <property type="term" value="P:'de novo' IMP biosynthetic process"/>
    <property type="evidence" value="ECO:0007669"/>
    <property type="project" value="UniProtKB-UniRule"/>
</dbReference>
<dbReference type="CDD" id="cd01421">
    <property type="entry name" value="IMPCH"/>
    <property type="match status" value="1"/>
</dbReference>
<dbReference type="FunFam" id="3.40.140.20:FF:000001">
    <property type="entry name" value="Bifunctional purine biosynthesis protein PurH"/>
    <property type="match status" value="1"/>
</dbReference>
<dbReference type="FunFam" id="3.40.140.20:FF:000002">
    <property type="entry name" value="Bifunctional purine biosynthesis protein PurH"/>
    <property type="match status" value="1"/>
</dbReference>
<dbReference type="FunFam" id="3.40.50.1380:FF:000001">
    <property type="entry name" value="Bifunctional purine biosynthesis protein PurH"/>
    <property type="match status" value="1"/>
</dbReference>
<dbReference type="Gene3D" id="3.40.140.20">
    <property type="match status" value="2"/>
</dbReference>
<dbReference type="Gene3D" id="3.40.50.1380">
    <property type="entry name" value="Methylglyoxal synthase-like domain"/>
    <property type="match status" value="1"/>
</dbReference>
<dbReference type="HAMAP" id="MF_00139">
    <property type="entry name" value="PurH"/>
    <property type="match status" value="1"/>
</dbReference>
<dbReference type="InterPro" id="IPR024051">
    <property type="entry name" value="AICAR_Tfase_dup_dom_sf"/>
</dbReference>
<dbReference type="InterPro" id="IPR016193">
    <property type="entry name" value="Cytidine_deaminase-like"/>
</dbReference>
<dbReference type="InterPro" id="IPR011607">
    <property type="entry name" value="MGS-like_dom"/>
</dbReference>
<dbReference type="InterPro" id="IPR036914">
    <property type="entry name" value="MGS-like_dom_sf"/>
</dbReference>
<dbReference type="InterPro" id="IPR002695">
    <property type="entry name" value="PurH-like"/>
</dbReference>
<dbReference type="NCBIfam" id="NF002049">
    <property type="entry name" value="PRK00881.1"/>
    <property type="match status" value="1"/>
</dbReference>
<dbReference type="NCBIfam" id="TIGR00355">
    <property type="entry name" value="purH"/>
    <property type="match status" value="1"/>
</dbReference>
<dbReference type="PANTHER" id="PTHR11692:SF0">
    <property type="entry name" value="BIFUNCTIONAL PURINE BIOSYNTHESIS PROTEIN ATIC"/>
    <property type="match status" value="1"/>
</dbReference>
<dbReference type="PANTHER" id="PTHR11692">
    <property type="entry name" value="BIFUNCTIONAL PURINE BIOSYNTHESIS PROTEIN PURH"/>
    <property type="match status" value="1"/>
</dbReference>
<dbReference type="Pfam" id="PF01808">
    <property type="entry name" value="AICARFT_IMPCHas"/>
    <property type="match status" value="1"/>
</dbReference>
<dbReference type="Pfam" id="PF02142">
    <property type="entry name" value="MGS"/>
    <property type="match status" value="1"/>
</dbReference>
<dbReference type="PIRSF" id="PIRSF000414">
    <property type="entry name" value="AICARFT_IMPCHas"/>
    <property type="match status" value="1"/>
</dbReference>
<dbReference type="SMART" id="SM00798">
    <property type="entry name" value="AICARFT_IMPCHas"/>
    <property type="match status" value="1"/>
</dbReference>
<dbReference type="SMART" id="SM00851">
    <property type="entry name" value="MGS"/>
    <property type="match status" value="1"/>
</dbReference>
<dbReference type="SUPFAM" id="SSF53927">
    <property type="entry name" value="Cytidine deaminase-like"/>
    <property type="match status" value="1"/>
</dbReference>
<dbReference type="SUPFAM" id="SSF52335">
    <property type="entry name" value="Methylglyoxal synthase-like"/>
    <property type="match status" value="1"/>
</dbReference>
<dbReference type="PROSITE" id="PS51855">
    <property type="entry name" value="MGS"/>
    <property type="match status" value="1"/>
</dbReference>
<evidence type="ECO:0000255" key="1">
    <source>
        <dbReference type="HAMAP-Rule" id="MF_00139"/>
    </source>
</evidence>
<evidence type="ECO:0000255" key="2">
    <source>
        <dbReference type="PROSITE-ProRule" id="PRU01202"/>
    </source>
</evidence>
<protein>
    <recommendedName>
        <fullName evidence="1">Bifunctional purine biosynthesis protein PurH</fullName>
    </recommendedName>
    <domain>
        <recommendedName>
            <fullName evidence="1">Phosphoribosylaminoimidazolecarboxamide formyltransferase</fullName>
            <ecNumber evidence="1">2.1.2.3</ecNumber>
        </recommendedName>
        <alternativeName>
            <fullName evidence="1">AICAR transformylase</fullName>
        </alternativeName>
    </domain>
    <domain>
        <recommendedName>
            <fullName evidence="1">IMP cyclohydrolase</fullName>
            <ecNumber evidence="1">3.5.4.10</ecNumber>
        </recommendedName>
        <alternativeName>
            <fullName evidence="1">ATIC</fullName>
        </alternativeName>
        <alternativeName>
            <fullName evidence="1">IMP synthase</fullName>
        </alternativeName>
        <alternativeName>
            <fullName evidence="1">Inosinicase</fullName>
        </alternativeName>
    </domain>
</protein>
<gene>
    <name evidence="1" type="primary">purH</name>
    <name type="ordered locus">RHOS4_27180</name>
    <name type="ORF">RSP_1100</name>
</gene>
<accession>Q3IYU8</accession>
<organism>
    <name type="scientific">Cereibacter sphaeroides (strain ATCC 17023 / DSM 158 / JCM 6121 / CCUG 31486 / LMG 2827 / NBRC 12203 / NCIMB 8253 / ATH 2.4.1.)</name>
    <name type="common">Rhodobacter sphaeroides</name>
    <dbReference type="NCBI Taxonomy" id="272943"/>
    <lineage>
        <taxon>Bacteria</taxon>
        <taxon>Pseudomonadati</taxon>
        <taxon>Pseudomonadota</taxon>
        <taxon>Alphaproteobacteria</taxon>
        <taxon>Rhodobacterales</taxon>
        <taxon>Paracoccaceae</taxon>
        <taxon>Cereibacter</taxon>
    </lineage>
</organism>